<name>RS10_SALPK</name>
<sequence>MQNQRIRIRLKAFDHRLIDQSTAEIVETAKRTGAQVRGPIPLPTRKERFTVLISPHVNKDARDQYEIRTHKRLVDIVEPTEKTVDALMRLDLAAGVDVQISLG</sequence>
<protein>
    <recommendedName>
        <fullName evidence="1">Small ribosomal subunit protein uS10</fullName>
    </recommendedName>
    <alternativeName>
        <fullName evidence="2">30S ribosomal protein S10</fullName>
    </alternativeName>
</protein>
<organism>
    <name type="scientific">Salmonella paratyphi A (strain AKU_12601)</name>
    <dbReference type="NCBI Taxonomy" id="554290"/>
    <lineage>
        <taxon>Bacteria</taxon>
        <taxon>Pseudomonadati</taxon>
        <taxon>Pseudomonadota</taxon>
        <taxon>Gammaproteobacteria</taxon>
        <taxon>Enterobacterales</taxon>
        <taxon>Enterobacteriaceae</taxon>
        <taxon>Salmonella</taxon>
    </lineage>
</organism>
<gene>
    <name evidence="1" type="primary">rpsJ</name>
    <name type="ordered locus">SSPA3086</name>
</gene>
<comment type="function">
    <text evidence="1">Involved in the binding of tRNA to the ribosomes.</text>
</comment>
<comment type="subunit">
    <text evidence="1">Part of the 30S ribosomal subunit.</text>
</comment>
<comment type="similarity">
    <text evidence="1">Belongs to the universal ribosomal protein uS10 family.</text>
</comment>
<feature type="chain" id="PRO_1000127181" description="Small ribosomal subunit protein uS10">
    <location>
        <begin position="1"/>
        <end position="103"/>
    </location>
</feature>
<dbReference type="EMBL" id="FM200053">
    <property type="protein sequence ID" value="CAR61337.1"/>
    <property type="molecule type" value="Genomic_DNA"/>
</dbReference>
<dbReference type="RefSeq" id="WP_001181005.1">
    <property type="nucleotide sequence ID" value="NC_011147.1"/>
</dbReference>
<dbReference type="SMR" id="B5BGY7"/>
<dbReference type="GeneID" id="98390443"/>
<dbReference type="KEGG" id="sek:SSPA3086"/>
<dbReference type="HOGENOM" id="CLU_122625_1_3_6"/>
<dbReference type="Proteomes" id="UP000001869">
    <property type="component" value="Chromosome"/>
</dbReference>
<dbReference type="GO" id="GO:1990904">
    <property type="term" value="C:ribonucleoprotein complex"/>
    <property type="evidence" value="ECO:0007669"/>
    <property type="project" value="UniProtKB-KW"/>
</dbReference>
<dbReference type="GO" id="GO:0005840">
    <property type="term" value="C:ribosome"/>
    <property type="evidence" value="ECO:0007669"/>
    <property type="project" value="UniProtKB-KW"/>
</dbReference>
<dbReference type="GO" id="GO:0003735">
    <property type="term" value="F:structural constituent of ribosome"/>
    <property type="evidence" value="ECO:0007669"/>
    <property type="project" value="InterPro"/>
</dbReference>
<dbReference type="GO" id="GO:0000049">
    <property type="term" value="F:tRNA binding"/>
    <property type="evidence" value="ECO:0007669"/>
    <property type="project" value="UniProtKB-UniRule"/>
</dbReference>
<dbReference type="GO" id="GO:0006412">
    <property type="term" value="P:translation"/>
    <property type="evidence" value="ECO:0007669"/>
    <property type="project" value="UniProtKB-UniRule"/>
</dbReference>
<dbReference type="FunFam" id="3.30.70.600:FF:000001">
    <property type="entry name" value="30S ribosomal protein S10"/>
    <property type="match status" value="1"/>
</dbReference>
<dbReference type="Gene3D" id="3.30.70.600">
    <property type="entry name" value="Ribosomal protein S10 domain"/>
    <property type="match status" value="1"/>
</dbReference>
<dbReference type="HAMAP" id="MF_00508">
    <property type="entry name" value="Ribosomal_uS10"/>
    <property type="match status" value="1"/>
</dbReference>
<dbReference type="InterPro" id="IPR001848">
    <property type="entry name" value="Ribosomal_uS10"/>
</dbReference>
<dbReference type="InterPro" id="IPR018268">
    <property type="entry name" value="Ribosomal_uS10_CS"/>
</dbReference>
<dbReference type="InterPro" id="IPR027486">
    <property type="entry name" value="Ribosomal_uS10_dom"/>
</dbReference>
<dbReference type="InterPro" id="IPR036838">
    <property type="entry name" value="Ribosomal_uS10_dom_sf"/>
</dbReference>
<dbReference type="NCBIfam" id="NF001861">
    <property type="entry name" value="PRK00596.1"/>
    <property type="match status" value="1"/>
</dbReference>
<dbReference type="NCBIfam" id="TIGR01049">
    <property type="entry name" value="rpsJ_bact"/>
    <property type="match status" value="1"/>
</dbReference>
<dbReference type="PANTHER" id="PTHR11700">
    <property type="entry name" value="30S RIBOSOMAL PROTEIN S10 FAMILY MEMBER"/>
    <property type="match status" value="1"/>
</dbReference>
<dbReference type="Pfam" id="PF00338">
    <property type="entry name" value="Ribosomal_S10"/>
    <property type="match status" value="1"/>
</dbReference>
<dbReference type="PRINTS" id="PR00971">
    <property type="entry name" value="RIBOSOMALS10"/>
</dbReference>
<dbReference type="SMART" id="SM01403">
    <property type="entry name" value="Ribosomal_S10"/>
    <property type="match status" value="1"/>
</dbReference>
<dbReference type="SUPFAM" id="SSF54999">
    <property type="entry name" value="Ribosomal protein S10"/>
    <property type="match status" value="1"/>
</dbReference>
<dbReference type="PROSITE" id="PS00361">
    <property type="entry name" value="RIBOSOMAL_S10"/>
    <property type="match status" value="1"/>
</dbReference>
<accession>B5BGY7</accession>
<proteinExistence type="inferred from homology"/>
<keyword id="KW-0687">Ribonucleoprotein</keyword>
<keyword id="KW-0689">Ribosomal protein</keyword>
<reference key="1">
    <citation type="journal article" date="2009" name="BMC Genomics">
        <title>Pseudogene accumulation in the evolutionary histories of Salmonella enterica serovars Paratyphi A and Typhi.</title>
        <authorList>
            <person name="Holt K.E."/>
            <person name="Thomson N.R."/>
            <person name="Wain J."/>
            <person name="Langridge G.C."/>
            <person name="Hasan R."/>
            <person name="Bhutta Z.A."/>
            <person name="Quail M.A."/>
            <person name="Norbertczak H."/>
            <person name="Walker D."/>
            <person name="Simmonds M."/>
            <person name="White B."/>
            <person name="Bason N."/>
            <person name="Mungall K."/>
            <person name="Dougan G."/>
            <person name="Parkhill J."/>
        </authorList>
    </citation>
    <scope>NUCLEOTIDE SEQUENCE [LARGE SCALE GENOMIC DNA]</scope>
    <source>
        <strain>AKU_12601</strain>
    </source>
</reference>
<evidence type="ECO:0000255" key="1">
    <source>
        <dbReference type="HAMAP-Rule" id="MF_00508"/>
    </source>
</evidence>
<evidence type="ECO:0000305" key="2"/>